<sequence length="319" mass="34450">MKRRTFLAMSLALTFLPSVALADNIPVRVGYIADYWGTSITAIASEKGLWEKHGLDADTRVFTNGPIQVQALGAGSLDFGYIGPGALWLPASGKAKIVAINSVGFSDRVIAQEGFKSMADLKGKKIGVPEGTSGDMLLRLALGKAGMKLDDVQVIKMDPSTVVSAFASKQIDAAGIWYPLIGTIKEHVPGMVELAANSDFFPDKTFPSAFIARNEIVAENPEAVKRMIAVIEEAEDFRTANPEQSVDITAKFLKVDKANLETEAKNGKSLTSEELVKLTRDGSVNGWLSGMADMFVTFGKLKSPLDPKDYYLADYFTAK</sequence>
<accession>Q576E1</accession>
<feature type="signal peptide" evidence="1">
    <location>
        <begin position="1"/>
        <end position="22"/>
    </location>
</feature>
<feature type="chain" id="PRO_0000284079" description="Putative binding protein BruAb2_1122">
    <location>
        <begin position="23"/>
        <end position="319"/>
    </location>
</feature>
<dbReference type="EMBL" id="AE017224">
    <property type="protein sequence ID" value="AAX76493.1"/>
    <property type="molecule type" value="Genomic_DNA"/>
</dbReference>
<dbReference type="RefSeq" id="WP_002967147.1">
    <property type="nucleotide sequence ID" value="NC_006933.1"/>
</dbReference>
<dbReference type="SMR" id="Q576E1"/>
<dbReference type="EnsemblBacteria" id="AAX76493">
    <property type="protein sequence ID" value="AAX76493"/>
    <property type="gene ID" value="BruAb2_1122"/>
</dbReference>
<dbReference type="KEGG" id="bmb:BruAb2_1122"/>
<dbReference type="HOGENOM" id="CLU_028871_3_0_5"/>
<dbReference type="Proteomes" id="UP000000540">
    <property type="component" value="Chromosome II"/>
</dbReference>
<dbReference type="GO" id="GO:0016020">
    <property type="term" value="C:membrane"/>
    <property type="evidence" value="ECO:0007669"/>
    <property type="project" value="InterPro"/>
</dbReference>
<dbReference type="GO" id="GO:0042597">
    <property type="term" value="C:periplasmic space"/>
    <property type="evidence" value="ECO:0007669"/>
    <property type="project" value="UniProtKB-SubCell"/>
</dbReference>
<dbReference type="GO" id="GO:0042626">
    <property type="term" value="F:ATPase-coupled transmembrane transporter activity"/>
    <property type="evidence" value="ECO:0007669"/>
    <property type="project" value="InterPro"/>
</dbReference>
<dbReference type="CDD" id="cd13561">
    <property type="entry name" value="PBP2_SsuA_like_4"/>
    <property type="match status" value="1"/>
</dbReference>
<dbReference type="Gene3D" id="3.40.190.10">
    <property type="entry name" value="Periplasmic binding protein-like II"/>
    <property type="match status" value="3"/>
</dbReference>
<dbReference type="InterPro" id="IPR010067">
    <property type="entry name" value="ABC_SsuA_sub-bd"/>
</dbReference>
<dbReference type="InterPro" id="IPR001638">
    <property type="entry name" value="Solute-binding_3/MltF_N"/>
</dbReference>
<dbReference type="InterPro" id="IPR015168">
    <property type="entry name" value="SsuA/THI5"/>
</dbReference>
<dbReference type="NCBIfam" id="TIGR01728">
    <property type="entry name" value="SsuA_fam"/>
    <property type="match status" value="1"/>
</dbReference>
<dbReference type="PANTHER" id="PTHR30024">
    <property type="entry name" value="ALIPHATIC SULFONATES-BINDING PROTEIN-RELATED"/>
    <property type="match status" value="1"/>
</dbReference>
<dbReference type="PANTHER" id="PTHR30024:SF47">
    <property type="entry name" value="TAURINE-BINDING PERIPLASMIC PROTEIN"/>
    <property type="match status" value="1"/>
</dbReference>
<dbReference type="Pfam" id="PF09084">
    <property type="entry name" value="NMT1"/>
    <property type="match status" value="1"/>
</dbReference>
<dbReference type="SMART" id="SM00062">
    <property type="entry name" value="PBPb"/>
    <property type="match status" value="1"/>
</dbReference>
<dbReference type="SUPFAM" id="SSF53850">
    <property type="entry name" value="Periplasmic binding protein-like II"/>
    <property type="match status" value="1"/>
</dbReference>
<reference key="1">
    <citation type="journal article" date="2005" name="J. Bacteriol.">
        <title>Completion of the genome sequence of Brucella abortus and comparison to the highly similar genomes of Brucella melitensis and Brucella suis.</title>
        <authorList>
            <person name="Halling S.M."/>
            <person name="Peterson-Burch B.D."/>
            <person name="Bricker B.J."/>
            <person name="Zuerner R.L."/>
            <person name="Qing Z."/>
            <person name="Li L.-L."/>
            <person name="Kapur V."/>
            <person name="Alt D.P."/>
            <person name="Olsen S.C."/>
        </authorList>
    </citation>
    <scope>NUCLEOTIDE SEQUENCE [LARGE SCALE GENOMIC DNA]</scope>
    <source>
        <strain>9-941</strain>
    </source>
</reference>
<organism>
    <name type="scientific">Brucella abortus biovar 1 (strain 9-941)</name>
    <dbReference type="NCBI Taxonomy" id="262698"/>
    <lineage>
        <taxon>Bacteria</taxon>
        <taxon>Pseudomonadati</taxon>
        <taxon>Pseudomonadota</taxon>
        <taxon>Alphaproteobacteria</taxon>
        <taxon>Hyphomicrobiales</taxon>
        <taxon>Brucellaceae</taxon>
        <taxon>Brucella/Ochrobactrum group</taxon>
        <taxon>Brucella</taxon>
    </lineage>
</organism>
<proteinExistence type="inferred from homology"/>
<evidence type="ECO:0000255" key="1"/>
<evidence type="ECO:0000305" key="2"/>
<keyword id="KW-0574">Periplasm</keyword>
<keyword id="KW-0732">Signal</keyword>
<keyword id="KW-0813">Transport</keyword>
<comment type="function">
    <text>Probably part of an ABC transporter complex.</text>
</comment>
<comment type="subunit">
    <text evidence="2">The complex is composed of two ATP-binding proteins (BruAb2_1123), two transmembrane proteins (BruAb2_1124) and a solute-binding protein (BruAb2_1122).</text>
</comment>
<comment type="subcellular location">
    <subcellularLocation>
        <location evidence="2">Periplasm</location>
    </subcellularLocation>
</comment>
<comment type="similarity">
    <text evidence="2">Belongs to the bacterial solute-binding protein SsuA/TauA family.</text>
</comment>
<gene>
    <name type="ordered locus">BruAb2_1122</name>
</gene>
<protein>
    <recommendedName>
        <fullName>Putative binding protein BruAb2_1122</fullName>
    </recommendedName>
</protein>
<name>Y3422_BRUAB</name>